<feature type="chain" id="PRO_0000438203" description="Cytochrome P450 monooxygenase dtpC">
    <location>
        <begin position="1"/>
        <end position="181"/>
    </location>
</feature>
<feature type="binding site" description="axial binding residue" evidence="1">
    <location>
        <position position="125"/>
    </location>
    <ligand>
        <name>heme</name>
        <dbReference type="ChEBI" id="CHEBI:30413"/>
    </ligand>
    <ligandPart>
        <name>Fe</name>
        <dbReference type="ChEBI" id="CHEBI:18248"/>
    </ligandPart>
</feature>
<accession>B8NR71</accession>
<comment type="function">
    <text evidence="2">Cytochrome P450 monooxygenase; part of the gene cluster that mediates the biosynthesis of the dimeric diketopiperazine alkaloid ditryptophenaline (PubMed:24677498). The nonribosomal peptide synthase dtpA accepts L-tryptophan and L-phenylalanine as its substrates and forms the phenylalanyl-tryptophanyl cyclic dipeptide product cyclophenylalanyltryptophenyl (PubMed:24677498). The N-methyltransferase dtpB is responsible for the N-methylation of cyclophenylalanyltryptophenyl to yield cyclo-N-methylphenylalanyltryptophenyl (PubMed:24677498). The cytochrome P450 monooxygenase is responsible not only for pyrroloindole ring formation but also for concurrent dimerization of N-methylphenylalanyltryptophanyl diketopiperazine monomers into a homodimeric product (PubMed:24677498).</text>
</comment>
<comment type="cofactor">
    <cofactor evidence="1">
        <name>heme</name>
        <dbReference type="ChEBI" id="CHEBI:30413"/>
    </cofactor>
</comment>
<comment type="pathway">
    <text evidence="2">Alkaloid biosynthesis.</text>
</comment>
<comment type="pathway">
    <text evidence="2">Secondary metabolite biosynthesis.</text>
</comment>
<comment type="disruption phenotype">
    <text evidence="2">Abolishes the production of ditryptophenaline but leads to the accumulation of cyclo-N-methylphenylalanyltryptophenyl (PubMed:24677498).</text>
</comment>
<comment type="similarity">
    <text evidence="4">Belongs to the cytochrome P450 family.</text>
</comment>
<keyword id="KW-0349">Heme</keyword>
<keyword id="KW-0408">Iron</keyword>
<keyword id="KW-0479">Metal-binding</keyword>
<keyword id="KW-0503">Monooxygenase</keyword>
<keyword id="KW-0560">Oxidoreductase</keyword>
<proteinExistence type="evidence at protein level"/>
<gene>
    <name evidence="3" type="primary">dtpC</name>
    <name type="ORF">AFLA_005460</name>
</gene>
<dbReference type="EC" id="1.-.-.-" evidence="2"/>
<dbReference type="EMBL" id="EQ963482">
    <property type="protein sequence ID" value="EED47904.1"/>
    <property type="molecule type" value="Genomic_DNA"/>
</dbReference>
<dbReference type="RefSeq" id="XP_002382746.1">
    <property type="nucleotide sequence ID" value="XM_002382705.1"/>
</dbReference>
<dbReference type="SMR" id="B8NR71"/>
<dbReference type="STRING" id="332952.B8NR71"/>
<dbReference type="EnsemblFungi" id="EED47904">
    <property type="protein sequence ID" value="EED47904"/>
    <property type="gene ID" value="AFLA_005460"/>
</dbReference>
<dbReference type="VEuPathDB" id="FungiDB:AFLA_011896"/>
<dbReference type="eggNOG" id="KOG0158">
    <property type="taxonomic scope" value="Eukaryota"/>
</dbReference>
<dbReference type="HOGENOM" id="CLU_1488691_0_0_1"/>
<dbReference type="OMA" id="YYERPLE"/>
<dbReference type="GO" id="GO:0020037">
    <property type="term" value="F:heme binding"/>
    <property type="evidence" value="ECO:0007669"/>
    <property type="project" value="InterPro"/>
</dbReference>
<dbReference type="GO" id="GO:0005506">
    <property type="term" value="F:iron ion binding"/>
    <property type="evidence" value="ECO:0007669"/>
    <property type="project" value="InterPro"/>
</dbReference>
<dbReference type="GO" id="GO:0004497">
    <property type="term" value="F:monooxygenase activity"/>
    <property type="evidence" value="ECO:0007669"/>
    <property type="project" value="UniProtKB-KW"/>
</dbReference>
<dbReference type="GO" id="GO:0016705">
    <property type="term" value="F:oxidoreductase activity, acting on paired donors, with incorporation or reduction of molecular oxygen"/>
    <property type="evidence" value="ECO:0007669"/>
    <property type="project" value="InterPro"/>
</dbReference>
<dbReference type="GO" id="GO:0019748">
    <property type="term" value="P:secondary metabolic process"/>
    <property type="evidence" value="ECO:0007669"/>
    <property type="project" value="UniProtKB-ARBA"/>
</dbReference>
<dbReference type="Gene3D" id="1.10.630.10">
    <property type="entry name" value="Cytochrome P450"/>
    <property type="match status" value="1"/>
</dbReference>
<dbReference type="InterPro" id="IPR001128">
    <property type="entry name" value="Cyt_P450"/>
</dbReference>
<dbReference type="InterPro" id="IPR002403">
    <property type="entry name" value="Cyt_P450_E_grp-IV"/>
</dbReference>
<dbReference type="InterPro" id="IPR036396">
    <property type="entry name" value="Cyt_P450_sf"/>
</dbReference>
<dbReference type="PANTHER" id="PTHR46206">
    <property type="entry name" value="CYTOCHROME P450"/>
    <property type="match status" value="1"/>
</dbReference>
<dbReference type="Pfam" id="PF00067">
    <property type="entry name" value="p450"/>
    <property type="match status" value="1"/>
</dbReference>
<dbReference type="PRINTS" id="PR00465">
    <property type="entry name" value="EP450IV"/>
</dbReference>
<dbReference type="SUPFAM" id="SSF48264">
    <property type="entry name" value="Cytochrome P450"/>
    <property type="match status" value="1"/>
</dbReference>
<reference key="1">
    <citation type="journal article" date="2015" name="Genome Announc.">
        <title>Genome sequence of Aspergillus flavus NRRL 3357, a strain that causes aflatoxin contamination of food and feed.</title>
        <authorList>
            <person name="Nierman W.C."/>
            <person name="Yu J."/>
            <person name="Fedorova-Abrams N.D."/>
            <person name="Losada L."/>
            <person name="Cleveland T.E."/>
            <person name="Bhatnagar D."/>
            <person name="Bennett J.W."/>
            <person name="Dean R."/>
            <person name="Payne G.A."/>
        </authorList>
    </citation>
    <scope>NUCLEOTIDE SEQUENCE [LARGE SCALE GENOMIC DNA]</scope>
    <source>
        <strain>ATCC 200026 / FGSC A1120 / IAM 13836 / NRRL 3357 / JCM 12722 / SRRC 167</strain>
    </source>
</reference>
<reference key="2">
    <citation type="journal article" date="2014" name="ChemBioChem">
        <title>Cytochrome P450 as dimerization catalyst in diketopiperazine alkaloid biosynthesis.</title>
        <authorList>
            <person name="Saruwatari T."/>
            <person name="Yagishita F."/>
            <person name="Mino T."/>
            <person name="Noguchi H."/>
            <person name="Hotta K."/>
            <person name="Watanabe K."/>
        </authorList>
    </citation>
    <scope>FUNCTION</scope>
    <scope>CATALYTIC ACTIVITY</scope>
    <scope>DISRUPTION PHENOTYPE</scope>
</reference>
<sequence>MKTPEYLAPLREELAAALKQADNAWSFDIFKHTPKLESFTKECLRVFTPSGKKPLQLRSTGRTLSPGTKFSLPAQQAHLDPDNYPNPNIFDGYRFCDPQSGACDIRGTITPSAKWLIFGIGTSACPARLLATRISQTLFFKVLRKYDLRLKLDNGQPEVVYAATNMFVNFNTQMYVKSASI</sequence>
<organism>
    <name type="scientific">Aspergillus flavus (strain ATCC 200026 / FGSC A1120 / IAM 13836 / NRRL 3357 / JCM 12722 / SRRC 167)</name>
    <dbReference type="NCBI Taxonomy" id="332952"/>
    <lineage>
        <taxon>Eukaryota</taxon>
        <taxon>Fungi</taxon>
        <taxon>Dikarya</taxon>
        <taxon>Ascomycota</taxon>
        <taxon>Pezizomycotina</taxon>
        <taxon>Eurotiomycetes</taxon>
        <taxon>Eurotiomycetidae</taxon>
        <taxon>Eurotiales</taxon>
        <taxon>Aspergillaceae</taxon>
        <taxon>Aspergillus</taxon>
        <taxon>Aspergillus subgen. Circumdati</taxon>
    </lineage>
</organism>
<name>DTPC_ASPFN</name>
<protein>
    <recommendedName>
        <fullName evidence="3">Cytochrome P450 monooxygenase dtpC</fullName>
        <ecNumber evidence="2">1.-.-.-</ecNumber>
    </recommendedName>
    <alternativeName>
        <fullName evidence="3">Ditryptophenaline biosynthesis protein C</fullName>
    </alternativeName>
</protein>
<evidence type="ECO:0000250" key="1">
    <source>
        <dbReference type="UniProtKB" id="P04798"/>
    </source>
</evidence>
<evidence type="ECO:0000269" key="2">
    <source>
    </source>
</evidence>
<evidence type="ECO:0000303" key="3">
    <source>
    </source>
</evidence>
<evidence type="ECO:0000305" key="4"/>